<organism>
    <name type="scientific">Corynebacterium jeikeium (strain K411)</name>
    <dbReference type="NCBI Taxonomy" id="306537"/>
    <lineage>
        <taxon>Bacteria</taxon>
        <taxon>Bacillati</taxon>
        <taxon>Actinomycetota</taxon>
        <taxon>Actinomycetes</taxon>
        <taxon>Mycobacteriales</taxon>
        <taxon>Corynebacteriaceae</taxon>
        <taxon>Corynebacterium</taxon>
    </lineage>
</organism>
<name>SECA2_CORJK</name>
<evidence type="ECO:0000255" key="1">
    <source>
        <dbReference type="HAMAP-Rule" id="MF_01382"/>
    </source>
</evidence>
<accession>Q4JVU1</accession>
<gene>
    <name evidence="1" type="primary">secA2</name>
    <name type="ordered locus">jk0902</name>
</gene>
<protein>
    <recommendedName>
        <fullName evidence="1">Protein translocase subunit SecA 2</fullName>
        <ecNumber evidence="1">7.4.2.8</ecNumber>
    </recommendedName>
</protein>
<keyword id="KW-0067">ATP-binding</keyword>
<keyword id="KW-1003">Cell membrane</keyword>
<keyword id="KW-0963">Cytoplasm</keyword>
<keyword id="KW-0472">Membrane</keyword>
<keyword id="KW-0547">Nucleotide-binding</keyword>
<keyword id="KW-0653">Protein transport</keyword>
<keyword id="KW-1185">Reference proteome</keyword>
<keyword id="KW-1278">Translocase</keyword>
<keyword id="KW-0811">Translocation</keyword>
<keyword id="KW-0813">Transport</keyword>
<dbReference type="EC" id="7.4.2.8" evidence="1"/>
<dbReference type="EMBL" id="CR931997">
    <property type="protein sequence ID" value="CAI37066.1"/>
    <property type="molecule type" value="Genomic_DNA"/>
</dbReference>
<dbReference type="RefSeq" id="WP_011273492.1">
    <property type="nucleotide sequence ID" value="NC_007164.1"/>
</dbReference>
<dbReference type="SMR" id="Q4JVU1"/>
<dbReference type="STRING" id="306537.jk0902"/>
<dbReference type="KEGG" id="cjk:jk0902"/>
<dbReference type="PATRIC" id="fig|306537.10.peg.914"/>
<dbReference type="eggNOG" id="COG0653">
    <property type="taxonomic scope" value="Bacteria"/>
</dbReference>
<dbReference type="HOGENOM" id="CLU_005314_3_2_11"/>
<dbReference type="OrthoDB" id="9805579at2"/>
<dbReference type="Proteomes" id="UP000000545">
    <property type="component" value="Chromosome"/>
</dbReference>
<dbReference type="GO" id="GO:0031522">
    <property type="term" value="C:cell envelope Sec protein transport complex"/>
    <property type="evidence" value="ECO:0007669"/>
    <property type="project" value="TreeGrafter"/>
</dbReference>
<dbReference type="GO" id="GO:0005829">
    <property type="term" value="C:cytosol"/>
    <property type="evidence" value="ECO:0007669"/>
    <property type="project" value="TreeGrafter"/>
</dbReference>
<dbReference type="GO" id="GO:0005886">
    <property type="term" value="C:plasma membrane"/>
    <property type="evidence" value="ECO:0007669"/>
    <property type="project" value="UniProtKB-SubCell"/>
</dbReference>
<dbReference type="GO" id="GO:0005524">
    <property type="term" value="F:ATP binding"/>
    <property type="evidence" value="ECO:0007669"/>
    <property type="project" value="UniProtKB-UniRule"/>
</dbReference>
<dbReference type="GO" id="GO:0008564">
    <property type="term" value="F:protein-exporting ATPase activity"/>
    <property type="evidence" value="ECO:0007669"/>
    <property type="project" value="UniProtKB-EC"/>
</dbReference>
<dbReference type="GO" id="GO:0065002">
    <property type="term" value="P:intracellular protein transmembrane transport"/>
    <property type="evidence" value="ECO:0007669"/>
    <property type="project" value="UniProtKB-UniRule"/>
</dbReference>
<dbReference type="GO" id="GO:0017038">
    <property type="term" value="P:protein import"/>
    <property type="evidence" value="ECO:0007669"/>
    <property type="project" value="InterPro"/>
</dbReference>
<dbReference type="GO" id="GO:0006605">
    <property type="term" value="P:protein targeting"/>
    <property type="evidence" value="ECO:0007669"/>
    <property type="project" value="UniProtKB-UniRule"/>
</dbReference>
<dbReference type="GO" id="GO:0043952">
    <property type="term" value="P:protein transport by the Sec complex"/>
    <property type="evidence" value="ECO:0007669"/>
    <property type="project" value="TreeGrafter"/>
</dbReference>
<dbReference type="CDD" id="cd17928">
    <property type="entry name" value="DEXDc_SecA"/>
    <property type="match status" value="1"/>
</dbReference>
<dbReference type="CDD" id="cd18803">
    <property type="entry name" value="SF2_C_secA"/>
    <property type="match status" value="1"/>
</dbReference>
<dbReference type="FunFam" id="3.40.50.300:FF:000429">
    <property type="entry name" value="Preprotein translocase subunit SecA"/>
    <property type="match status" value="1"/>
</dbReference>
<dbReference type="Gene3D" id="1.10.3060.10">
    <property type="entry name" value="Helical scaffold and wing domains of SecA"/>
    <property type="match status" value="1"/>
</dbReference>
<dbReference type="Gene3D" id="3.40.50.300">
    <property type="entry name" value="P-loop containing nucleotide triphosphate hydrolases"/>
    <property type="match status" value="3"/>
</dbReference>
<dbReference type="Gene3D" id="3.90.1440.10">
    <property type="entry name" value="SecA, preprotein cross-linking domain"/>
    <property type="match status" value="1"/>
</dbReference>
<dbReference type="HAMAP" id="MF_01382">
    <property type="entry name" value="SecA"/>
    <property type="match status" value="1"/>
</dbReference>
<dbReference type="InterPro" id="IPR014001">
    <property type="entry name" value="Helicase_ATP-bd"/>
</dbReference>
<dbReference type="InterPro" id="IPR001650">
    <property type="entry name" value="Helicase_C-like"/>
</dbReference>
<dbReference type="InterPro" id="IPR027417">
    <property type="entry name" value="P-loop_NTPase"/>
</dbReference>
<dbReference type="InterPro" id="IPR000185">
    <property type="entry name" value="SecA"/>
</dbReference>
<dbReference type="InterPro" id="IPR026389">
    <property type="entry name" value="SecA_Actinobact-type"/>
</dbReference>
<dbReference type="InterPro" id="IPR020937">
    <property type="entry name" value="SecA_CS"/>
</dbReference>
<dbReference type="InterPro" id="IPR011115">
    <property type="entry name" value="SecA_DEAD"/>
</dbReference>
<dbReference type="InterPro" id="IPR014018">
    <property type="entry name" value="SecA_motor_DEAD"/>
</dbReference>
<dbReference type="InterPro" id="IPR011130">
    <property type="entry name" value="SecA_preprotein_X-link_dom"/>
</dbReference>
<dbReference type="InterPro" id="IPR044722">
    <property type="entry name" value="SecA_SF2_C"/>
</dbReference>
<dbReference type="InterPro" id="IPR011116">
    <property type="entry name" value="SecA_Wing/Scaffold"/>
</dbReference>
<dbReference type="InterPro" id="IPR036266">
    <property type="entry name" value="SecA_Wing/Scaffold_sf"/>
</dbReference>
<dbReference type="InterPro" id="IPR036670">
    <property type="entry name" value="SecA_X-link_sf"/>
</dbReference>
<dbReference type="NCBIfam" id="TIGR04221">
    <property type="entry name" value="SecA2_Mycobac"/>
    <property type="match status" value="1"/>
</dbReference>
<dbReference type="PANTHER" id="PTHR30612:SF0">
    <property type="entry name" value="CHLOROPLAST PROTEIN-TRANSPORTING ATPASE"/>
    <property type="match status" value="1"/>
</dbReference>
<dbReference type="PANTHER" id="PTHR30612">
    <property type="entry name" value="SECA INNER MEMBRANE COMPONENT OF SEC PROTEIN SECRETION SYSTEM"/>
    <property type="match status" value="1"/>
</dbReference>
<dbReference type="Pfam" id="PF21090">
    <property type="entry name" value="P-loop_SecA"/>
    <property type="match status" value="1"/>
</dbReference>
<dbReference type="Pfam" id="PF07517">
    <property type="entry name" value="SecA_DEAD"/>
    <property type="match status" value="1"/>
</dbReference>
<dbReference type="Pfam" id="PF01043">
    <property type="entry name" value="SecA_PP_bind"/>
    <property type="match status" value="1"/>
</dbReference>
<dbReference type="Pfam" id="PF07516">
    <property type="entry name" value="SecA_SW"/>
    <property type="match status" value="1"/>
</dbReference>
<dbReference type="PRINTS" id="PR00906">
    <property type="entry name" value="SECA"/>
</dbReference>
<dbReference type="SMART" id="SM00957">
    <property type="entry name" value="SecA_DEAD"/>
    <property type="match status" value="1"/>
</dbReference>
<dbReference type="SMART" id="SM00958">
    <property type="entry name" value="SecA_PP_bind"/>
    <property type="match status" value="1"/>
</dbReference>
<dbReference type="SUPFAM" id="SSF81886">
    <property type="entry name" value="Helical scaffold and wing domains of SecA"/>
    <property type="match status" value="1"/>
</dbReference>
<dbReference type="SUPFAM" id="SSF52540">
    <property type="entry name" value="P-loop containing nucleoside triphosphate hydrolases"/>
    <property type="match status" value="2"/>
</dbReference>
<dbReference type="SUPFAM" id="SSF81767">
    <property type="entry name" value="Pre-protein crosslinking domain of SecA"/>
    <property type="match status" value="1"/>
</dbReference>
<dbReference type="PROSITE" id="PS01312">
    <property type="entry name" value="SECA"/>
    <property type="match status" value="1"/>
</dbReference>
<dbReference type="PROSITE" id="PS51196">
    <property type="entry name" value="SECA_MOTOR_DEAD"/>
    <property type="match status" value="1"/>
</dbReference>
<reference key="1">
    <citation type="journal article" date="2005" name="J. Bacteriol.">
        <title>Complete genome sequence and analysis of the multiresistant nosocomial pathogen Corynebacterium jeikeium K411, a lipid-requiring bacterium of the human skin flora.</title>
        <authorList>
            <person name="Tauch A."/>
            <person name="Kaiser O."/>
            <person name="Hain T."/>
            <person name="Goesmann A."/>
            <person name="Weisshaar B."/>
            <person name="Albersmeier A."/>
            <person name="Bekel T."/>
            <person name="Bischoff N."/>
            <person name="Brune I."/>
            <person name="Chakraborty T."/>
            <person name="Kalinowski J."/>
            <person name="Meyer F."/>
            <person name="Rupp O."/>
            <person name="Schneiker S."/>
            <person name="Viehoever P."/>
            <person name="Puehler A."/>
        </authorList>
    </citation>
    <scope>NUCLEOTIDE SEQUENCE [LARGE SCALE GENOMIC DNA]</scope>
    <source>
        <strain>K411</strain>
    </source>
</reference>
<comment type="function">
    <text evidence="1">Part of the Sec protein translocase complex. Interacts with the SecYEG preprotein conducting channel. Has a central role in coupling the hydrolysis of ATP to the transfer of proteins into and across the cell membrane, serving as an ATP-driven molecular motor driving the stepwise translocation of polypeptide chains across the membrane.</text>
</comment>
<comment type="catalytic activity">
    <reaction evidence="1">
        <text>ATP + H2O + cellular proteinSide 1 = ADP + phosphate + cellular proteinSide 2.</text>
        <dbReference type="EC" id="7.4.2.8"/>
    </reaction>
</comment>
<comment type="subunit">
    <text evidence="1">Monomer and homodimer. Part of the essential Sec protein translocation apparatus which comprises SecA, SecYEG and auxiliary proteins SecDF. Other proteins may also be involved.</text>
</comment>
<comment type="subcellular location">
    <subcellularLocation>
        <location evidence="1">Cell membrane</location>
        <topology evidence="1">Peripheral membrane protein</topology>
        <orientation evidence="1">Cytoplasmic side</orientation>
    </subcellularLocation>
    <subcellularLocation>
        <location evidence="1">Cytoplasm</location>
    </subcellularLocation>
    <text evidence="1">Distribution is 50-50.</text>
</comment>
<comment type="similarity">
    <text evidence="1">Belongs to the SecA family.</text>
</comment>
<sequence>MAFDWFWKAMGSSPKKNQKKSRAVVAQADSSRYSGLSDAELRDAASDVVTEQSTSEDGHHFGGQVDDAPALLAILREAASRTLNMEPFDVQMQGTYRLLHGDVVEMATGEGKTLAGAMAAVGFALQGKRVHVITVNSYLAGRDNDWMGPMFDFFGLTHGAIREDLTADQRRDIYSRDVIFGAINELGFDVLRDQLITRRADQVRTPADVAVIDEADSVMVDEALVPLVLAGSEPGPAPAGRITDLVKRMEEDKHFHVSEDHRNVFLTDEGAAFVEKELGVDSLYEDEGELLVQVNVALHAEHLLIRDVHYIVRDGKVALIDGSRGRVAELQRWPDGLQAAVEAKEGLDVTDGGRILDQITIQALVGMYPEVCGMTGTALAAGDQLRQFYNLQVSVIEPNVPNIRFDEADRVYVSAAERNDAVVKHIVEVQKTGQPQLVGTQDVAESEELAEALLSAGVECSVLNAKNHEAEAAVVAEAGRPGRVTVSTQMAGRGTDIKLGGTDEAEHDEVVETGGLHVVGVGRFRSQRLDNQLRGRAGRQGDPGSSLFFVSLEDDVVAVGGAGEELQAQPEEDGLLPQKKVQQFVDHCQRVTEGQMLDIHATTWKYNKLIKDQRDIVNDRRDTLLDTAAAWDDLSYHNVDRAAELKKQGISEEVLEQAAREIMLFHLDNEWSEHLAYLDDVRESIHLRAIARESPIDEFHRMSIAAFGELAERAVNKARETFDEVEITSDGAQLGEMGLHKPSATWTYMVNDNPLSSSGGSVMGSIVQMFR</sequence>
<proteinExistence type="inferred from homology"/>
<feature type="chain" id="PRO_0000318346" description="Protein translocase subunit SecA 2">
    <location>
        <begin position="1"/>
        <end position="771"/>
    </location>
</feature>
<feature type="binding site" evidence="1">
    <location>
        <position position="91"/>
    </location>
    <ligand>
        <name>ATP</name>
        <dbReference type="ChEBI" id="CHEBI:30616"/>
    </ligand>
</feature>
<feature type="binding site" evidence="1">
    <location>
        <begin position="109"/>
        <end position="113"/>
    </location>
    <ligand>
        <name>ATP</name>
        <dbReference type="ChEBI" id="CHEBI:30616"/>
    </ligand>
</feature>
<feature type="binding site" evidence="1">
    <location>
        <position position="496"/>
    </location>
    <ligand>
        <name>ATP</name>
        <dbReference type="ChEBI" id="CHEBI:30616"/>
    </ligand>
</feature>